<proteinExistence type="evidence at protein level"/>
<protein>
    <recommendedName>
        <fullName>Xylosyltransferase 2</fullName>
        <ecNumber evidence="7 8 9 10">2.4.2.26</ecNumber>
    </recommendedName>
    <alternativeName>
        <fullName>Peptide O-xylosyltransferase 1</fullName>
    </alternativeName>
    <alternativeName>
        <fullName evidence="13">Xylosyltransferase II</fullName>
        <shortName evidence="11">XT-II</shortName>
        <shortName>XylT-II</shortName>
    </alternativeName>
</protein>
<dbReference type="EC" id="2.4.2.26" evidence="7 8 9 10"/>
<dbReference type="EMBL" id="AJ277442">
    <property type="protein sequence ID" value="CAC16788.1"/>
    <property type="molecule type" value="mRNA"/>
</dbReference>
<dbReference type="EMBL" id="AY358090">
    <property type="protein sequence ID" value="AAQ88457.1"/>
    <property type="molecule type" value="mRNA"/>
</dbReference>
<dbReference type="EMBL" id="BC052262">
    <property type="protein sequence ID" value="AAH52262.2"/>
    <property type="molecule type" value="mRNA"/>
</dbReference>
<dbReference type="CCDS" id="CCDS11563.1">
    <molecule id="Q9H1B5-1"/>
</dbReference>
<dbReference type="RefSeq" id="NP_071450.2">
    <molecule id="Q9H1B5-1"/>
    <property type="nucleotide sequence ID" value="NM_022167.4"/>
</dbReference>
<dbReference type="SMR" id="Q9H1B5"/>
<dbReference type="BioGRID" id="122081">
    <property type="interactions" value="69"/>
</dbReference>
<dbReference type="FunCoup" id="Q9H1B5">
    <property type="interactions" value="763"/>
</dbReference>
<dbReference type="IntAct" id="Q9H1B5">
    <property type="interactions" value="34"/>
</dbReference>
<dbReference type="STRING" id="9606.ENSP00000017003"/>
<dbReference type="CAZy" id="GT14">
    <property type="family name" value="Glycosyltransferase Family 14"/>
</dbReference>
<dbReference type="GlyCosmos" id="Q9H1B5">
    <property type="glycosylation" value="7 sites, 1 glycan"/>
</dbReference>
<dbReference type="GlyGen" id="Q9H1B5">
    <property type="glycosylation" value="17 sites, 2 O-linked glycans (12 sites)"/>
</dbReference>
<dbReference type="iPTMnet" id="Q9H1B5"/>
<dbReference type="PhosphoSitePlus" id="Q9H1B5"/>
<dbReference type="BioMuta" id="XYLT2"/>
<dbReference type="DMDM" id="126302616"/>
<dbReference type="jPOST" id="Q9H1B5"/>
<dbReference type="MassIVE" id="Q9H1B5"/>
<dbReference type="PaxDb" id="9606-ENSP00000017003"/>
<dbReference type="PeptideAtlas" id="Q9H1B5"/>
<dbReference type="ProteomicsDB" id="80393">
    <molecule id="Q9H1B5-1"/>
</dbReference>
<dbReference type="ProteomicsDB" id="80394">
    <molecule id="Q9H1B5-2"/>
</dbReference>
<dbReference type="Pumba" id="Q9H1B5"/>
<dbReference type="Antibodypedia" id="2239">
    <property type="antibodies" value="100 antibodies from 15 providers"/>
</dbReference>
<dbReference type="DNASU" id="64132"/>
<dbReference type="Ensembl" id="ENST00000017003.7">
    <molecule id="Q9H1B5-1"/>
    <property type="protein sequence ID" value="ENSP00000017003.2"/>
    <property type="gene ID" value="ENSG00000015532.10"/>
</dbReference>
<dbReference type="GeneID" id="64132"/>
<dbReference type="KEGG" id="hsa:64132"/>
<dbReference type="MANE-Select" id="ENST00000017003.7">
    <property type="protein sequence ID" value="ENSP00000017003.2"/>
    <property type="RefSeq nucleotide sequence ID" value="NM_022167.4"/>
    <property type="RefSeq protein sequence ID" value="NP_071450.2"/>
</dbReference>
<dbReference type="UCSC" id="uc002iqo.5">
    <molecule id="Q9H1B5-1"/>
    <property type="organism name" value="human"/>
</dbReference>
<dbReference type="AGR" id="HGNC:15517"/>
<dbReference type="CTD" id="64132"/>
<dbReference type="DisGeNET" id="64132"/>
<dbReference type="GeneCards" id="XYLT2"/>
<dbReference type="HGNC" id="HGNC:15517">
    <property type="gene designation" value="XYLT2"/>
</dbReference>
<dbReference type="HPA" id="ENSG00000015532">
    <property type="expression patterns" value="Tissue enriched (stomach)"/>
</dbReference>
<dbReference type="MalaCards" id="XYLT2"/>
<dbReference type="MIM" id="264800">
    <property type="type" value="phenotype"/>
</dbReference>
<dbReference type="MIM" id="605822">
    <property type="type" value="phenotype"/>
</dbReference>
<dbReference type="MIM" id="608125">
    <property type="type" value="gene"/>
</dbReference>
<dbReference type="neXtProt" id="NX_Q9H1B5"/>
<dbReference type="OpenTargets" id="ENSG00000015532"/>
<dbReference type="Orphanet" id="85194">
    <property type="disease" value="Spondylo-ocular syndrome"/>
</dbReference>
<dbReference type="PharmGKB" id="PA37974"/>
<dbReference type="VEuPathDB" id="HostDB:ENSG00000015532"/>
<dbReference type="eggNOG" id="KOG0799">
    <property type="taxonomic scope" value="Eukaryota"/>
</dbReference>
<dbReference type="GeneTree" id="ENSGT00940000158326"/>
<dbReference type="HOGENOM" id="CLU_012840_0_0_1"/>
<dbReference type="InParanoid" id="Q9H1B5"/>
<dbReference type="OMA" id="WENAHDI"/>
<dbReference type="OrthoDB" id="2019572at2759"/>
<dbReference type="PAN-GO" id="Q9H1B5">
    <property type="GO annotations" value="3 GO annotations based on evolutionary models"/>
</dbReference>
<dbReference type="PhylomeDB" id="Q9H1B5"/>
<dbReference type="TreeFam" id="TF315534"/>
<dbReference type="BioCyc" id="MetaCyc:HS00371-MONOMER"/>
<dbReference type="BRENDA" id="2.4.2.26">
    <property type="organism ID" value="2681"/>
</dbReference>
<dbReference type="PathwayCommons" id="Q9H1B5"/>
<dbReference type="Reactome" id="R-HSA-1971475">
    <property type="pathway name" value="A tetrasaccharide linker sequence is required for GAG synthesis"/>
</dbReference>
<dbReference type="SignaLink" id="Q9H1B5"/>
<dbReference type="UniPathway" id="UPA00755"/>
<dbReference type="UniPathway" id="UPA00756"/>
<dbReference type="BioGRID-ORCS" id="64132">
    <property type="hits" value="165 hits in 1156 CRISPR screens"/>
</dbReference>
<dbReference type="GeneWiki" id="XYLT2"/>
<dbReference type="GenomeRNAi" id="64132"/>
<dbReference type="Pharos" id="Q9H1B5">
    <property type="development level" value="Tbio"/>
</dbReference>
<dbReference type="PRO" id="PR:Q9H1B5"/>
<dbReference type="Proteomes" id="UP000005640">
    <property type="component" value="Chromosome 17"/>
</dbReference>
<dbReference type="RNAct" id="Q9H1B5">
    <property type="molecule type" value="protein"/>
</dbReference>
<dbReference type="Bgee" id="ENSG00000015532">
    <property type="expression patterns" value="Expressed in body of stomach and 154 other cell types or tissues"/>
</dbReference>
<dbReference type="ExpressionAtlas" id="Q9H1B5">
    <property type="expression patterns" value="baseline and differential"/>
</dbReference>
<dbReference type="GO" id="GO:0005615">
    <property type="term" value="C:extracellular space"/>
    <property type="evidence" value="ECO:0000314"/>
    <property type="project" value="UniProtKB"/>
</dbReference>
<dbReference type="GO" id="GO:0000139">
    <property type="term" value="C:Golgi membrane"/>
    <property type="evidence" value="ECO:0000304"/>
    <property type="project" value="Reactome"/>
</dbReference>
<dbReference type="GO" id="GO:0000287">
    <property type="term" value="F:magnesium ion binding"/>
    <property type="evidence" value="ECO:0000314"/>
    <property type="project" value="UniProtKB"/>
</dbReference>
<dbReference type="GO" id="GO:0030145">
    <property type="term" value="F:manganese ion binding"/>
    <property type="evidence" value="ECO:0000314"/>
    <property type="project" value="UniProtKB"/>
</dbReference>
<dbReference type="GO" id="GO:0030158">
    <property type="term" value="F:protein xylosyltransferase activity"/>
    <property type="evidence" value="ECO:0000314"/>
    <property type="project" value="UniProtKB"/>
</dbReference>
<dbReference type="GO" id="GO:0050650">
    <property type="term" value="P:chondroitin sulfate proteoglycan biosynthetic process"/>
    <property type="evidence" value="ECO:0000315"/>
    <property type="project" value="UniProtKB"/>
</dbReference>
<dbReference type="GO" id="GO:0006024">
    <property type="term" value="P:glycosaminoglycan biosynthetic process"/>
    <property type="evidence" value="ECO:0000303"/>
    <property type="project" value="UniProtKB"/>
</dbReference>
<dbReference type="GO" id="GO:0030203">
    <property type="term" value="P:glycosaminoglycan metabolic process"/>
    <property type="evidence" value="ECO:0000304"/>
    <property type="project" value="Reactome"/>
</dbReference>
<dbReference type="GO" id="GO:0015012">
    <property type="term" value="P:heparan sulfate proteoglycan biosynthetic process"/>
    <property type="evidence" value="ECO:0000315"/>
    <property type="project" value="UniProtKB"/>
</dbReference>
<dbReference type="GO" id="GO:0030210">
    <property type="term" value="P:heparin proteoglycan biosynthetic process"/>
    <property type="evidence" value="ECO:0007669"/>
    <property type="project" value="Ensembl"/>
</dbReference>
<dbReference type="InterPro" id="IPR003406">
    <property type="entry name" value="Glyco_trans_14"/>
</dbReference>
<dbReference type="InterPro" id="IPR043538">
    <property type="entry name" value="XYLT"/>
</dbReference>
<dbReference type="InterPro" id="IPR024448">
    <property type="entry name" value="XylT_C"/>
</dbReference>
<dbReference type="PANTHER" id="PTHR46025:SF1">
    <property type="entry name" value="XYLOSYLTRANSFERASE 2"/>
    <property type="match status" value="1"/>
</dbReference>
<dbReference type="PANTHER" id="PTHR46025">
    <property type="entry name" value="XYLOSYLTRANSFERASE OXT"/>
    <property type="match status" value="1"/>
</dbReference>
<dbReference type="Pfam" id="PF02485">
    <property type="entry name" value="Branch"/>
    <property type="match status" value="1"/>
</dbReference>
<dbReference type="Pfam" id="PF12529">
    <property type="entry name" value="Xylo_C"/>
    <property type="match status" value="1"/>
</dbReference>
<comment type="function">
    <text evidence="7 10">Catalyzes the first step in the biosynthesis of chondroitin sulfate, heparan sulfate and dermatan sulfate proteoglycans, such as DCN. Transfers D-xylose from UDP-D-xylose to specific serine residues of the core protein.</text>
</comment>
<comment type="catalytic activity">
    <reaction evidence="7 8 9 10">
        <text>UDP-alpha-D-xylose + L-seryl-[protein] = 3-O-(beta-D-xylosyl)-L-seryl-[protein] + UDP + H(+)</text>
        <dbReference type="Rhea" id="RHEA:50192"/>
        <dbReference type="Rhea" id="RHEA-COMP:9863"/>
        <dbReference type="Rhea" id="RHEA-COMP:12567"/>
        <dbReference type="ChEBI" id="CHEBI:15378"/>
        <dbReference type="ChEBI" id="CHEBI:29999"/>
        <dbReference type="ChEBI" id="CHEBI:57632"/>
        <dbReference type="ChEBI" id="CHEBI:58223"/>
        <dbReference type="ChEBI" id="CHEBI:132085"/>
        <dbReference type="EC" id="2.4.2.26"/>
    </reaction>
</comment>
<comment type="cofactor">
    <cofactor evidence="8">
        <name>Mg(2+)</name>
        <dbReference type="ChEBI" id="CHEBI:18420"/>
    </cofactor>
    <cofactor evidence="8">
        <name>Mn(2+)</name>
        <dbReference type="ChEBI" id="CHEBI:29035"/>
    </cofactor>
    <text evidence="8">Active with either Mg(2+) or Mn(2+), but activity is highest when both are present.</text>
</comment>
<comment type="pathway">
    <text evidence="7">Glycan metabolism; chondroitin sulfate biosynthesis.</text>
</comment>
<comment type="pathway">
    <text evidence="7 10">Glycan metabolism; heparan sulfate biosynthesis.</text>
</comment>
<comment type="subunit">
    <text evidence="1">Monomer.</text>
</comment>
<comment type="subcellular location">
    <subcellularLocation>
        <location evidence="14">Golgi apparatus membrane</location>
        <topology evidence="14">Single-pass type II membrane protein</topology>
    </subcellularLocation>
    <subcellularLocation>
        <location evidence="7 9">Secreted</location>
    </subcellularLocation>
</comment>
<comment type="alternative products">
    <event type="alternative splicing"/>
    <isoform>
        <id>Q9H1B5-1</id>
        <name>1</name>
        <sequence type="displayed"/>
    </isoform>
    <isoform>
        <id>Q9H1B5-2</id>
        <name>2</name>
        <sequence type="described" ref="VSP_013758 VSP_013759"/>
    </isoform>
</comment>
<comment type="tissue specificity">
    <text evidence="4">Widely expressed. Expressed at higher level in kidney and pancreas.</text>
</comment>
<comment type="PTM">
    <text evidence="1">Contains disulfide bonds.</text>
</comment>
<comment type="disease" evidence="10">
    <disease id="DI-04546">
        <name>Spondyloocular syndrome</name>
        <acronym>SOS</acronym>
        <description>A syndrome characterized by cataract, loss of vision due to retinal detachment, facial dysmorphism, facial hypotonia, normal height with disproportional short trunk, osteoporosis, immobile spine with thoracic kyphosis and reduced lumbal lordosis.</description>
        <dbReference type="MIM" id="605822"/>
    </disease>
    <text>The disease is caused by variants affecting the gene represented in this entry.</text>
</comment>
<comment type="disease" evidence="6">
    <disease id="DI-00959">
        <name>Pseudoxanthoma elasticum</name>
        <acronym>PXE</acronym>
        <description>A multisystem disorder characterized by accumulation of mineralized and fragmented elastic fibers in the skin, vascular walls, and Burch membrane in the eye. Clinically, patients exhibit characteristic lesions of the posterior segment of the eye including peau d'orange, angioid streaks, and choroidal neovascularizations, of the skin including soft, ivory colored papules in a reticular pattern that predominantly affect the neck and large flexor surfaces, and of the cardiovascular system with peripheral and coronary arterial occlusive disease as well as gastrointestinal bleedings.</description>
        <dbReference type="MIM" id="264800"/>
    </disease>
    <text evidence="6">The gene represented in this entry acts as a disease modifier. PXE patients carrying causative ABCC6 mutations, manifest a more severe disease course characterized by earlier onset, frequent skin lesions and higher organ involvement, in the presence of XYLT2 variants.</text>
</comment>
<comment type="similarity">
    <text evidence="14">Belongs to the glycosyltransferase 14 family. XylT subfamily.</text>
</comment>
<keyword id="KW-0025">Alternative splicing</keyword>
<keyword id="KW-0225">Disease variant</keyword>
<keyword id="KW-1015">Disulfide bond</keyword>
<keyword id="KW-0325">Glycoprotein</keyword>
<keyword id="KW-0328">Glycosyltransferase</keyword>
<keyword id="KW-0333">Golgi apparatus</keyword>
<keyword id="KW-0460">Magnesium</keyword>
<keyword id="KW-0464">Manganese</keyword>
<keyword id="KW-0472">Membrane</keyword>
<keyword id="KW-0479">Metal-binding</keyword>
<keyword id="KW-1267">Proteomics identification</keyword>
<keyword id="KW-1185">Reference proteome</keyword>
<keyword id="KW-0964">Secreted</keyword>
<keyword id="KW-0735">Signal-anchor</keyword>
<keyword id="KW-0808">Transferase</keyword>
<keyword id="KW-0812">Transmembrane</keyword>
<keyword id="KW-1133">Transmembrane helix</keyword>
<name>XYLT2_HUMAN</name>
<organism>
    <name type="scientific">Homo sapiens</name>
    <name type="common">Human</name>
    <dbReference type="NCBI Taxonomy" id="9606"/>
    <lineage>
        <taxon>Eukaryota</taxon>
        <taxon>Metazoa</taxon>
        <taxon>Chordata</taxon>
        <taxon>Craniata</taxon>
        <taxon>Vertebrata</taxon>
        <taxon>Euteleostomi</taxon>
        <taxon>Mammalia</taxon>
        <taxon>Eutheria</taxon>
        <taxon>Euarchontoglires</taxon>
        <taxon>Primates</taxon>
        <taxon>Haplorrhini</taxon>
        <taxon>Catarrhini</taxon>
        <taxon>Hominidae</taxon>
        <taxon>Homo</taxon>
    </lineage>
</organism>
<sequence>MVASARVQKLVRRYKLAIATALAILLLQGLVVWSFSGLEEDEAGEKGRQRKPRPLDPGEGSKDTDSSAGRRGSTGRRHGRWRGRAESPGVPVAKVVRAVTSRQRASRRVPPAPPPEAPGRQNLSGAAAGEALVGAAGFPPHGDTGSVEGAPQPTDNGFTPKCEIVGKDALSALARASTKQCQQEIANVVCLHQAGSLMPKAVPRHCQLTGKMSPGIQWDESQAQQPMDGPPVRIAYMLVVHGRAIRQLKRLLKAVYHEQHFFYIHVDKRSDYLHREVVELAQGYDNVRVTPWRMVTIWGGASLLRMYLRSMRDLLEVPGWAWDFFINLSATDYPTRTNEELVAFLSKNRDKNFLKSHGRDNSRFIKKQGLDRLFHECDSHMWRLGERQIPAGIVVDGGSDWFVLTRSFVEYVVYTDDPLVAQLRQFYTYTLLPAESFFHTVLENSLACETLVDNNLRVTNWNRKLGCKCQYKHIVDWCGCSPNDFKPQDFLRLQQVSRPTFFARKFESTVNQEVLEILDFHLYGSYPPGTPALKAYWENTYDAADGPSGLSDVMLTAYTAFARLSLHHAATAAPPMGTPLCRFEPRGLPSSVHLYFYDDHFQGYLVTQAVQPSAQGPAETLEMWLMPQGSLKLLGRSDQASRLQSLEVGTDWDPKERLFRNFGGLLGPLDEPVAVQRWARGPNLTATVVWIDPTYVVATSYDITVDTETEVTQYKPPLSRPLRPGPWTVRLLQFWEPLGETRFLVLPLTFNRKLPLRKDDASWLHAGPPHNEYMEQSFQGLSSILNLPQPELAEEAAQRHTQLTGPALEAWTDRELSSFWSVAGLCAIGPSPCPSLEPCRLTSWSSLSPDPKSELGPVKADGRLR</sequence>
<reference key="1">
    <citation type="journal article" date="2000" name="J. Mol. Biol.">
        <title>Molecular cloning and expression of human UDP-D-xylose:proteoglycan core protein beta-D-xylosyltransferase and its first isoform XT-II.</title>
        <authorList>
            <person name="Goetting C."/>
            <person name="Kuhn J."/>
            <person name="Zahn R."/>
            <person name="Brinkmann T."/>
            <person name="Kleesiek K."/>
        </authorList>
    </citation>
    <scope>NUCLEOTIDE SEQUENCE [MRNA] (ISOFORM 1)</scope>
    <scope>VARIANT THR-305</scope>
    <scope>TISSUE SPECIFICITY</scope>
    <source>
        <tissue>Chondrosarcoma</tissue>
    </source>
</reference>
<reference key="2">
    <citation type="journal article" date="2003" name="Genome Res.">
        <title>The secreted protein discovery initiative (SPDI), a large-scale effort to identify novel human secreted and transmembrane proteins: a bioinformatics assessment.</title>
        <authorList>
            <person name="Clark H.F."/>
            <person name="Gurney A.L."/>
            <person name="Abaya E."/>
            <person name="Baker K."/>
            <person name="Baldwin D.T."/>
            <person name="Brush J."/>
            <person name="Chen J."/>
            <person name="Chow B."/>
            <person name="Chui C."/>
            <person name="Crowley C."/>
            <person name="Currell B."/>
            <person name="Deuel B."/>
            <person name="Dowd P."/>
            <person name="Eaton D."/>
            <person name="Foster J.S."/>
            <person name="Grimaldi C."/>
            <person name="Gu Q."/>
            <person name="Hass P.E."/>
            <person name="Heldens S."/>
            <person name="Huang A."/>
            <person name="Kim H.S."/>
            <person name="Klimowski L."/>
            <person name="Jin Y."/>
            <person name="Johnson S."/>
            <person name="Lee J."/>
            <person name="Lewis L."/>
            <person name="Liao D."/>
            <person name="Mark M.R."/>
            <person name="Robbie E."/>
            <person name="Sanchez C."/>
            <person name="Schoenfeld J."/>
            <person name="Seshagiri S."/>
            <person name="Simmons L."/>
            <person name="Singh J."/>
            <person name="Smith V."/>
            <person name="Stinson J."/>
            <person name="Vagts A."/>
            <person name="Vandlen R.L."/>
            <person name="Watanabe C."/>
            <person name="Wieand D."/>
            <person name="Woods K."/>
            <person name="Xie M.-H."/>
            <person name="Yansura D.G."/>
            <person name="Yi S."/>
            <person name="Yu G."/>
            <person name="Yuan J."/>
            <person name="Zhang M."/>
            <person name="Zhang Z."/>
            <person name="Goddard A.D."/>
            <person name="Wood W.I."/>
            <person name="Godowski P.J."/>
            <person name="Gray A.M."/>
        </authorList>
    </citation>
    <scope>NUCLEOTIDE SEQUENCE [LARGE SCALE MRNA] (ISOFORM 2)</scope>
</reference>
<reference key="3">
    <citation type="journal article" date="2004" name="Genome Res.">
        <title>The status, quality, and expansion of the NIH full-length cDNA project: the Mammalian Gene Collection (MGC).</title>
        <authorList>
            <consortium name="The MGC Project Team"/>
        </authorList>
    </citation>
    <scope>NUCLEOTIDE SEQUENCE [LARGE SCALE MRNA] (ISOFORM 1)</scope>
    <scope>VARIANT THR-305</scope>
    <source>
        <tissue>Pancreas</tissue>
    </source>
</reference>
<reference key="4">
    <citation type="journal article" date="2006" name="J. Med. Genet.">
        <title>Polymorphisms in the xylosyltransferase genes cause higher serum XT-I activity in patients with pseudoxanthoma elasticum (PXE) and are involved in a severe disease course.</title>
        <authorList>
            <person name="Schon S."/>
            <person name="Schulz V."/>
            <person name="Prante C."/>
            <person name="Hendig D."/>
            <person name="Szliska C."/>
            <person name="Kuhn J."/>
            <person name="Kleesiek K."/>
            <person name="Gotting C."/>
        </authorList>
    </citation>
    <scope>INVOLVEMENT IN PXE</scope>
    <scope>VARIANT PXE ARG-801</scope>
    <scope>VARIANTS ASN-56; LEU-115; THR-305 AND LEU-418</scope>
</reference>
<reference key="5">
    <citation type="journal article" date="2007" name="J. Biol. Chem.">
        <title>Human xylosyltransferase II is involved in the biosynthesis of the uniform tetrasaccharide linkage region in chondroitin sulfate and heparan sulfate proteoglycans.</title>
        <authorList>
            <person name="Poenighaus C."/>
            <person name="Ambrosius M."/>
            <person name="Casanova J.C."/>
            <person name="Prante C."/>
            <person name="Kuhn J."/>
            <person name="Esko J.D."/>
            <person name="Kleesiek K."/>
            <person name="Goetting C."/>
        </authorList>
    </citation>
    <scope>FUNCTION</scope>
    <scope>CATALYTIC ACTIVITY</scope>
    <scope>PATHWAY</scope>
    <scope>SUBCELLULAR LOCATION</scope>
</reference>
<reference key="6">
    <citation type="journal article" date="2008" name="Biochem. Biophys. Res. Commun.">
        <title>Heterologous expression and biochemical characterization of soluble human xylosyltransferase II.</title>
        <authorList>
            <person name="Casanova J.C."/>
            <person name="Kuhn J."/>
            <person name="Kleesiek K."/>
            <person name="Goetting C."/>
        </authorList>
    </citation>
    <scope>CATALYTIC ACTIVITY</scope>
    <scope>COFACTOR</scope>
</reference>
<reference key="7">
    <citation type="journal article" date="2015" name="Am. J. Hum. Genet.">
        <title>Homozygosity for frameshift mutations in XYLT2 result in a spondylo-ocular syndrome with bone fragility, cataracts, and hearing defects.</title>
        <authorList>
            <person name="Munns C.F."/>
            <person name="Fahiminiya S."/>
            <person name="Poudel N."/>
            <person name="Munteanu M.C."/>
            <person name="Majewski J."/>
            <person name="Sillence D.O."/>
            <person name="Metcalf J.P."/>
            <person name="Biggin A."/>
            <person name="Glorieux F."/>
            <person name="Fassier F."/>
            <person name="Rauch F."/>
            <person name="Hinsdale M.E."/>
        </authorList>
    </citation>
    <scope>FUNCTION</scope>
    <scope>CATALYTIC ACTIVITY</scope>
    <scope>PATHWAY</scope>
    <scope>INVOLVEMENT IN SOS</scope>
</reference>
<reference key="8">
    <citation type="journal article" date="2015" name="Biochem. Biophys. Res. Commun.">
        <title>Xylosyltransferase II is the predominant isoenzyme which is responsible for the steady-state level of xylosyltransferase activity in human serum.</title>
        <authorList>
            <person name="Kuhn J."/>
            <person name="Goetting C."/>
            <person name="Beahm B.J."/>
            <person name="Bertozzi C.R."/>
            <person name="Faust I."/>
            <person name="Kuzaj P."/>
            <person name="Knabbe C."/>
            <person name="Hendig D."/>
        </authorList>
    </citation>
    <scope>CATALYTIC ACTIVITY</scope>
    <scope>SUBCELLULAR LOCATION</scope>
</reference>
<accession>Q9H1B5</accession>
<accession>Q6UY41</accession>
<accession>Q86V00</accession>
<feature type="chain" id="PRO_0000191406" description="Xylosyltransferase 2">
    <location>
        <begin position="1"/>
        <end position="865"/>
    </location>
</feature>
<feature type="topological domain" description="Cytoplasmic" evidence="2">
    <location>
        <begin position="1"/>
        <end position="15"/>
    </location>
</feature>
<feature type="transmembrane region" description="Helical; Signal-anchor for type II membrane protein" evidence="2">
    <location>
        <begin position="16"/>
        <end position="36"/>
    </location>
</feature>
<feature type="topological domain" description="Lumenal" evidence="2">
    <location>
        <begin position="37"/>
        <end position="865"/>
    </location>
</feature>
<feature type="region of interest" description="Disordered" evidence="3">
    <location>
        <begin position="41"/>
        <end position="157"/>
    </location>
</feature>
<feature type="region of interest" description="Disordered" evidence="3">
    <location>
        <begin position="846"/>
        <end position="865"/>
    </location>
</feature>
<feature type="compositionally biased region" description="Basic and acidic residues" evidence="3">
    <location>
        <begin position="53"/>
        <end position="65"/>
    </location>
</feature>
<feature type="compositionally biased region" description="Basic residues" evidence="3">
    <location>
        <begin position="73"/>
        <end position="82"/>
    </location>
</feature>
<feature type="compositionally biased region" description="Low complexity" evidence="3">
    <location>
        <begin position="125"/>
        <end position="137"/>
    </location>
</feature>
<feature type="binding site" evidence="1">
    <location>
        <position position="239"/>
    </location>
    <ligand>
        <name>UDP-alpha-D-xylose</name>
        <dbReference type="ChEBI" id="CHEBI:57632"/>
    </ligand>
</feature>
<feature type="binding site" evidence="1">
    <location>
        <position position="267"/>
    </location>
    <ligand>
        <name>UDP-alpha-D-xylose</name>
        <dbReference type="ChEBI" id="CHEBI:57632"/>
    </ligand>
</feature>
<feature type="binding site" evidence="1">
    <location>
        <begin position="296"/>
        <end position="298"/>
    </location>
    <ligand>
        <name>UDP-alpha-D-xylose</name>
        <dbReference type="ChEBI" id="CHEBI:57632"/>
    </ligand>
</feature>
<feature type="binding site" evidence="1">
    <location>
        <begin position="400"/>
        <end position="401"/>
    </location>
    <ligand>
        <name>UDP-alpha-D-xylose</name>
        <dbReference type="ChEBI" id="CHEBI:57632"/>
    </ligand>
</feature>
<feature type="binding site" evidence="1">
    <location>
        <position position="481"/>
    </location>
    <ligand>
        <name>UDP-alpha-D-xylose</name>
        <dbReference type="ChEBI" id="CHEBI:57632"/>
    </ligand>
</feature>
<feature type="binding site" evidence="1">
    <location>
        <begin position="504"/>
        <end position="505"/>
    </location>
    <ligand>
        <name>UDP-alpha-D-xylose</name>
        <dbReference type="ChEBI" id="CHEBI:57632"/>
    </ligand>
</feature>
<feature type="glycosylation site" description="N-linked (GlcNAc...) asparagine" evidence="2">
    <location>
        <position position="122"/>
    </location>
</feature>
<feature type="glycosylation site" description="N-linked (GlcNAc...) asparagine" evidence="2">
    <location>
        <position position="327"/>
    </location>
</feature>
<feature type="glycosylation site" description="N-linked (GlcNAc...) asparagine" evidence="2">
    <location>
        <position position="683"/>
    </location>
</feature>
<feature type="disulfide bond" evidence="1">
    <location>
        <begin position="162"/>
        <end position="190"/>
    </location>
</feature>
<feature type="disulfide bond" evidence="1">
    <location>
        <begin position="206"/>
        <end position="448"/>
    </location>
</feature>
<feature type="disulfide bond" evidence="1">
    <location>
        <begin position="467"/>
        <end position="480"/>
    </location>
</feature>
<feature type="disulfide bond" evidence="1">
    <location>
        <begin position="469"/>
        <end position="478"/>
    </location>
</feature>
<feature type="disulfide bond" evidence="1">
    <location>
        <begin position="581"/>
        <end position="833"/>
    </location>
</feature>
<feature type="disulfide bond" evidence="1">
    <location>
        <begin position="826"/>
        <end position="839"/>
    </location>
</feature>
<feature type="splice variant" id="VSP_013758" description="In isoform 2." evidence="12">
    <original>FEPRGLPSSVHLYFYDDHFQGYLVTQAVQPSAQGPAETLEMWLMPQGSLKLLGRSD</original>
    <variation>LALIGTPKSVFSGTLGGYWGRWTSLWPCSAGPGAPTSQPQWSGSTQPMWWPHLMTS</variation>
    <location>
        <begin position="583"/>
        <end position="638"/>
    </location>
</feature>
<feature type="splice variant" id="VSP_013759" description="In isoform 2." evidence="12">
    <location>
        <begin position="639"/>
        <end position="865"/>
    </location>
</feature>
<feature type="sequence variant" id="VAR_071276" description="In dbSNP:rs113835371." evidence="6">
    <original>D</original>
    <variation>N</variation>
    <location>
        <position position="56"/>
    </location>
</feature>
<feature type="sequence variant" id="VAR_049328" description="In dbSNP:rs739990.">
    <original>G</original>
    <variation>R</variation>
    <location>
        <position position="60"/>
    </location>
</feature>
<feature type="sequence variant" id="VAR_071277" description="In dbSNP:rs748114111." evidence="6">
    <original>P</original>
    <variation>L</variation>
    <location>
        <position position="115"/>
    </location>
</feature>
<feature type="sequence variant" id="VAR_022453" description="In dbSNP:rs12451299." evidence="4 5 6">
    <original>R</original>
    <variation>T</variation>
    <location>
        <position position="305"/>
    </location>
</feature>
<feature type="sequence variant" id="VAR_071278" description="In dbSNP:rs72832454." evidence="6">
    <original>P</original>
    <variation>L</variation>
    <location>
        <position position="418"/>
    </location>
</feature>
<feature type="sequence variant" id="VAR_022454" description="In PXE; acts as a modifier of disease severity; more frequent in patients with a severe disease course; dbSNP:rs6504649." evidence="6">
    <original>T</original>
    <variation>R</variation>
    <location>
        <position position="801"/>
    </location>
</feature>
<gene>
    <name type="primary">XYLT2</name>
    <name type="synonym">XT2</name>
    <name type="ORF">UNQ3058/PRO9878</name>
</gene>
<evidence type="ECO:0000250" key="1">
    <source>
        <dbReference type="UniProtKB" id="Q86Y38"/>
    </source>
</evidence>
<evidence type="ECO:0000255" key="2"/>
<evidence type="ECO:0000256" key="3">
    <source>
        <dbReference type="SAM" id="MobiDB-lite"/>
    </source>
</evidence>
<evidence type="ECO:0000269" key="4">
    <source>
    </source>
</evidence>
<evidence type="ECO:0000269" key="5">
    <source>
    </source>
</evidence>
<evidence type="ECO:0000269" key="6">
    <source>
    </source>
</evidence>
<evidence type="ECO:0000269" key="7">
    <source>
    </source>
</evidence>
<evidence type="ECO:0000269" key="8">
    <source>
    </source>
</evidence>
<evidence type="ECO:0000269" key="9">
    <source>
    </source>
</evidence>
<evidence type="ECO:0000269" key="10">
    <source>
    </source>
</evidence>
<evidence type="ECO:0000303" key="11">
    <source>
    </source>
</evidence>
<evidence type="ECO:0000303" key="12">
    <source>
    </source>
</evidence>
<evidence type="ECO:0000303" key="13">
    <source>
    </source>
</evidence>
<evidence type="ECO:0000305" key="14"/>